<comment type="function">
    <text evidence="1">Catalyzes the interconversion of L-alanine and D-alanine. May also act on other amino acids.</text>
</comment>
<comment type="catalytic activity">
    <reaction evidence="1">
        <text>L-alanine = D-alanine</text>
        <dbReference type="Rhea" id="RHEA:20249"/>
        <dbReference type="ChEBI" id="CHEBI:57416"/>
        <dbReference type="ChEBI" id="CHEBI:57972"/>
        <dbReference type="EC" id="5.1.1.1"/>
    </reaction>
</comment>
<comment type="cofactor">
    <cofactor evidence="1">
        <name>pyridoxal 5'-phosphate</name>
        <dbReference type="ChEBI" id="CHEBI:597326"/>
    </cofactor>
</comment>
<comment type="pathway">
    <text evidence="1">Amino-acid biosynthesis; D-alanine biosynthesis; D-alanine from L-alanine: step 1/1.</text>
</comment>
<comment type="similarity">
    <text evidence="1">Belongs to the alanine racemase family.</text>
</comment>
<sequence length="387" mass="43171">MFKHLRPVWAEINLDNLASNMKHIKELSNTKEIIGIVKADAYGHGALDIVPTLIENGATALAVAVVSEGVELRRGGIECPIMVLGFTPPSLIDMLLKHDIEQTVFSLDYAKELSKAAEKMHKVAKIHIAVDTGMGRIGFLPNEQSIQDVKAISMLPNIKIKGMFSHFSTADEKNKEYSAYQLNQFNKFYEGLKRENVNIETRHISNSAAIMDLPETIFEGVRPGIILYGYYPSNEVDKTKLELKPVMQLKTNVVHIKKIPSGEYISYGRKFKTDRESLIATLPVGYADGYTRLLFGKAKVIINGQLAPVVGRICMDQCMVDITDIKGDIKVGEEVILIGEKNGVKIDADDIAEMLGTINYEVICMISKRVPRVYIKNGEVIKVRNYI</sequence>
<reference key="1">
    <citation type="journal article" date="2006" name="Nat. Biotechnol.">
        <title>The genome and transcriptomes of the anti-tumor agent Clostridium novyi-NT.</title>
        <authorList>
            <person name="Bettegowda C."/>
            <person name="Huang X."/>
            <person name="Lin J."/>
            <person name="Cheong I."/>
            <person name="Kohli M."/>
            <person name="Szabo S.A."/>
            <person name="Zhang X."/>
            <person name="Diaz L.A. Jr."/>
            <person name="Velculescu V.E."/>
            <person name="Parmigiani G."/>
            <person name="Kinzler K.W."/>
            <person name="Vogelstein B."/>
            <person name="Zhou S."/>
        </authorList>
    </citation>
    <scope>NUCLEOTIDE SEQUENCE [LARGE SCALE GENOMIC DNA]</scope>
    <source>
        <strain>NT</strain>
    </source>
</reference>
<feature type="chain" id="PRO_1000065979" description="Alanine racemase">
    <location>
        <begin position="1"/>
        <end position="387"/>
    </location>
</feature>
<feature type="active site" description="Proton acceptor; specific for D-alanine" evidence="1">
    <location>
        <position position="38"/>
    </location>
</feature>
<feature type="active site" description="Proton acceptor; specific for L-alanine" evidence="1">
    <location>
        <position position="267"/>
    </location>
</feature>
<feature type="binding site" evidence="1">
    <location>
        <position position="136"/>
    </location>
    <ligand>
        <name>substrate</name>
    </ligand>
</feature>
<feature type="binding site" evidence="1">
    <location>
        <position position="315"/>
    </location>
    <ligand>
        <name>substrate</name>
    </ligand>
</feature>
<feature type="modified residue" description="N6-(pyridoxal phosphate)lysine" evidence="1">
    <location>
        <position position="38"/>
    </location>
</feature>
<protein>
    <recommendedName>
        <fullName evidence="1">Alanine racemase</fullName>
        <ecNumber evidence="1">5.1.1.1</ecNumber>
    </recommendedName>
</protein>
<dbReference type="EC" id="5.1.1.1" evidence="1"/>
<dbReference type="EMBL" id="CP000382">
    <property type="protein sequence ID" value="ABK61810.1"/>
    <property type="molecule type" value="Genomic_DNA"/>
</dbReference>
<dbReference type="RefSeq" id="WP_011721355.1">
    <property type="nucleotide sequence ID" value="NC_008593.1"/>
</dbReference>
<dbReference type="SMR" id="A0PY95"/>
<dbReference type="STRING" id="386415.NT01CX_1264"/>
<dbReference type="KEGG" id="cno:NT01CX_1264"/>
<dbReference type="PATRIC" id="fig|386415.7.peg.374"/>
<dbReference type="eggNOG" id="COG0787">
    <property type="taxonomic scope" value="Bacteria"/>
</dbReference>
<dbReference type="HOGENOM" id="CLU_028393_2_2_9"/>
<dbReference type="UniPathway" id="UPA00042">
    <property type="reaction ID" value="UER00497"/>
</dbReference>
<dbReference type="Proteomes" id="UP000008220">
    <property type="component" value="Chromosome"/>
</dbReference>
<dbReference type="GO" id="GO:0005829">
    <property type="term" value="C:cytosol"/>
    <property type="evidence" value="ECO:0007669"/>
    <property type="project" value="TreeGrafter"/>
</dbReference>
<dbReference type="GO" id="GO:0008784">
    <property type="term" value="F:alanine racemase activity"/>
    <property type="evidence" value="ECO:0007669"/>
    <property type="project" value="UniProtKB-UniRule"/>
</dbReference>
<dbReference type="GO" id="GO:0030170">
    <property type="term" value="F:pyridoxal phosphate binding"/>
    <property type="evidence" value="ECO:0007669"/>
    <property type="project" value="UniProtKB-UniRule"/>
</dbReference>
<dbReference type="GO" id="GO:0030632">
    <property type="term" value="P:D-alanine biosynthetic process"/>
    <property type="evidence" value="ECO:0007669"/>
    <property type="project" value="UniProtKB-UniRule"/>
</dbReference>
<dbReference type="GO" id="GO:0009252">
    <property type="term" value="P:peptidoglycan biosynthetic process"/>
    <property type="evidence" value="ECO:0007669"/>
    <property type="project" value="TreeGrafter"/>
</dbReference>
<dbReference type="CDD" id="cd00430">
    <property type="entry name" value="PLPDE_III_AR"/>
    <property type="match status" value="1"/>
</dbReference>
<dbReference type="FunFam" id="2.40.37.10:FF:000006">
    <property type="entry name" value="Alanine racemase"/>
    <property type="match status" value="1"/>
</dbReference>
<dbReference type="FunFam" id="3.20.20.10:FF:000002">
    <property type="entry name" value="Alanine racemase"/>
    <property type="match status" value="1"/>
</dbReference>
<dbReference type="Gene3D" id="3.20.20.10">
    <property type="entry name" value="Alanine racemase"/>
    <property type="match status" value="1"/>
</dbReference>
<dbReference type="Gene3D" id="2.40.37.10">
    <property type="entry name" value="Lyase, Ornithine Decarboxylase, Chain A, domain 1"/>
    <property type="match status" value="1"/>
</dbReference>
<dbReference type="HAMAP" id="MF_01201">
    <property type="entry name" value="Ala_racemase"/>
    <property type="match status" value="1"/>
</dbReference>
<dbReference type="InterPro" id="IPR000821">
    <property type="entry name" value="Ala_racemase"/>
</dbReference>
<dbReference type="InterPro" id="IPR009006">
    <property type="entry name" value="Ala_racemase/Decarboxylase_C"/>
</dbReference>
<dbReference type="InterPro" id="IPR011079">
    <property type="entry name" value="Ala_racemase_C"/>
</dbReference>
<dbReference type="InterPro" id="IPR001608">
    <property type="entry name" value="Ala_racemase_N"/>
</dbReference>
<dbReference type="InterPro" id="IPR020622">
    <property type="entry name" value="Ala_racemase_pyridoxalP-BS"/>
</dbReference>
<dbReference type="InterPro" id="IPR029066">
    <property type="entry name" value="PLP-binding_barrel"/>
</dbReference>
<dbReference type="NCBIfam" id="TIGR00492">
    <property type="entry name" value="alr"/>
    <property type="match status" value="1"/>
</dbReference>
<dbReference type="PANTHER" id="PTHR30511">
    <property type="entry name" value="ALANINE RACEMASE"/>
    <property type="match status" value="1"/>
</dbReference>
<dbReference type="PANTHER" id="PTHR30511:SF0">
    <property type="entry name" value="ALANINE RACEMASE, CATABOLIC-RELATED"/>
    <property type="match status" value="1"/>
</dbReference>
<dbReference type="Pfam" id="PF00842">
    <property type="entry name" value="Ala_racemase_C"/>
    <property type="match status" value="1"/>
</dbReference>
<dbReference type="Pfam" id="PF01168">
    <property type="entry name" value="Ala_racemase_N"/>
    <property type="match status" value="1"/>
</dbReference>
<dbReference type="PRINTS" id="PR00992">
    <property type="entry name" value="ALARACEMASE"/>
</dbReference>
<dbReference type="SMART" id="SM01005">
    <property type="entry name" value="Ala_racemase_C"/>
    <property type="match status" value="1"/>
</dbReference>
<dbReference type="SUPFAM" id="SSF50621">
    <property type="entry name" value="Alanine racemase C-terminal domain-like"/>
    <property type="match status" value="1"/>
</dbReference>
<dbReference type="SUPFAM" id="SSF51419">
    <property type="entry name" value="PLP-binding barrel"/>
    <property type="match status" value="1"/>
</dbReference>
<dbReference type="PROSITE" id="PS00395">
    <property type="entry name" value="ALANINE_RACEMASE"/>
    <property type="match status" value="1"/>
</dbReference>
<gene>
    <name type="primary">alr</name>
    <name type="ordered locus">NT01CX_1264</name>
</gene>
<name>ALR_CLONN</name>
<organism>
    <name type="scientific">Clostridium novyi (strain NT)</name>
    <dbReference type="NCBI Taxonomy" id="386415"/>
    <lineage>
        <taxon>Bacteria</taxon>
        <taxon>Bacillati</taxon>
        <taxon>Bacillota</taxon>
        <taxon>Clostridia</taxon>
        <taxon>Eubacteriales</taxon>
        <taxon>Clostridiaceae</taxon>
        <taxon>Clostridium</taxon>
    </lineage>
</organism>
<evidence type="ECO:0000255" key="1">
    <source>
        <dbReference type="HAMAP-Rule" id="MF_01201"/>
    </source>
</evidence>
<keyword id="KW-0413">Isomerase</keyword>
<keyword id="KW-0663">Pyridoxal phosphate</keyword>
<keyword id="KW-1185">Reference proteome</keyword>
<accession>A0PY95</accession>
<proteinExistence type="inferred from homology"/>